<reference key="1">
    <citation type="journal article" date="1997" name="Nature">
        <title>The complete genome sequence of the Gram-positive bacterium Bacillus subtilis.</title>
        <authorList>
            <person name="Kunst F."/>
            <person name="Ogasawara N."/>
            <person name="Moszer I."/>
            <person name="Albertini A.M."/>
            <person name="Alloni G."/>
            <person name="Azevedo V."/>
            <person name="Bertero M.G."/>
            <person name="Bessieres P."/>
            <person name="Bolotin A."/>
            <person name="Borchert S."/>
            <person name="Borriss R."/>
            <person name="Boursier L."/>
            <person name="Brans A."/>
            <person name="Braun M."/>
            <person name="Brignell S.C."/>
            <person name="Bron S."/>
            <person name="Brouillet S."/>
            <person name="Bruschi C.V."/>
            <person name="Caldwell B."/>
            <person name="Capuano V."/>
            <person name="Carter N.M."/>
            <person name="Choi S.-K."/>
            <person name="Codani J.-J."/>
            <person name="Connerton I.F."/>
            <person name="Cummings N.J."/>
            <person name="Daniel R.A."/>
            <person name="Denizot F."/>
            <person name="Devine K.M."/>
            <person name="Duesterhoeft A."/>
            <person name="Ehrlich S.D."/>
            <person name="Emmerson P.T."/>
            <person name="Entian K.-D."/>
            <person name="Errington J."/>
            <person name="Fabret C."/>
            <person name="Ferrari E."/>
            <person name="Foulger D."/>
            <person name="Fritz C."/>
            <person name="Fujita M."/>
            <person name="Fujita Y."/>
            <person name="Fuma S."/>
            <person name="Galizzi A."/>
            <person name="Galleron N."/>
            <person name="Ghim S.-Y."/>
            <person name="Glaser P."/>
            <person name="Goffeau A."/>
            <person name="Golightly E.J."/>
            <person name="Grandi G."/>
            <person name="Guiseppi G."/>
            <person name="Guy B.J."/>
            <person name="Haga K."/>
            <person name="Haiech J."/>
            <person name="Harwood C.R."/>
            <person name="Henaut A."/>
            <person name="Hilbert H."/>
            <person name="Holsappel S."/>
            <person name="Hosono S."/>
            <person name="Hullo M.-F."/>
            <person name="Itaya M."/>
            <person name="Jones L.-M."/>
            <person name="Joris B."/>
            <person name="Karamata D."/>
            <person name="Kasahara Y."/>
            <person name="Klaerr-Blanchard M."/>
            <person name="Klein C."/>
            <person name="Kobayashi Y."/>
            <person name="Koetter P."/>
            <person name="Koningstein G."/>
            <person name="Krogh S."/>
            <person name="Kumano M."/>
            <person name="Kurita K."/>
            <person name="Lapidus A."/>
            <person name="Lardinois S."/>
            <person name="Lauber J."/>
            <person name="Lazarevic V."/>
            <person name="Lee S.-M."/>
            <person name="Levine A."/>
            <person name="Liu H."/>
            <person name="Masuda S."/>
            <person name="Mauel C."/>
            <person name="Medigue C."/>
            <person name="Medina N."/>
            <person name="Mellado R.P."/>
            <person name="Mizuno M."/>
            <person name="Moestl D."/>
            <person name="Nakai S."/>
            <person name="Noback M."/>
            <person name="Noone D."/>
            <person name="O'Reilly M."/>
            <person name="Ogawa K."/>
            <person name="Ogiwara A."/>
            <person name="Oudega B."/>
            <person name="Park S.-H."/>
            <person name="Parro V."/>
            <person name="Pohl T.M."/>
            <person name="Portetelle D."/>
            <person name="Porwollik S."/>
            <person name="Prescott A.M."/>
            <person name="Presecan E."/>
            <person name="Pujic P."/>
            <person name="Purnelle B."/>
            <person name="Rapoport G."/>
            <person name="Rey M."/>
            <person name="Reynolds S."/>
            <person name="Rieger M."/>
            <person name="Rivolta C."/>
            <person name="Rocha E."/>
            <person name="Roche B."/>
            <person name="Rose M."/>
            <person name="Sadaie Y."/>
            <person name="Sato T."/>
            <person name="Scanlan E."/>
            <person name="Schleich S."/>
            <person name="Schroeter R."/>
            <person name="Scoffone F."/>
            <person name="Sekiguchi J."/>
            <person name="Sekowska A."/>
            <person name="Seror S.J."/>
            <person name="Serror P."/>
            <person name="Shin B.-S."/>
            <person name="Soldo B."/>
            <person name="Sorokin A."/>
            <person name="Tacconi E."/>
            <person name="Takagi T."/>
            <person name="Takahashi H."/>
            <person name="Takemaru K."/>
            <person name="Takeuchi M."/>
            <person name="Tamakoshi A."/>
            <person name="Tanaka T."/>
            <person name="Terpstra P."/>
            <person name="Tognoni A."/>
            <person name="Tosato V."/>
            <person name="Uchiyama S."/>
            <person name="Vandenbol M."/>
            <person name="Vannier F."/>
            <person name="Vassarotti A."/>
            <person name="Viari A."/>
            <person name="Wambutt R."/>
            <person name="Wedler E."/>
            <person name="Wedler H."/>
            <person name="Weitzenegger T."/>
            <person name="Winters P."/>
            <person name="Wipat A."/>
            <person name="Yamamoto H."/>
            <person name="Yamane K."/>
            <person name="Yasumoto K."/>
            <person name="Yata K."/>
            <person name="Yoshida K."/>
            <person name="Yoshikawa H.-F."/>
            <person name="Zumstein E."/>
            <person name="Yoshikawa H."/>
            <person name="Danchin A."/>
        </authorList>
    </citation>
    <scope>NUCLEOTIDE SEQUENCE [LARGE SCALE GENOMIC DNA]</scope>
    <source>
        <strain>168</strain>
    </source>
</reference>
<gene>
    <name type="primary">yobB</name>
    <name type="ordered locus">BSU18820</name>
</gene>
<name>YOBB_BACSU</name>
<accession>O31836</accession>
<sequence>MKIRKILLSSALSFGMLISAVPALAAGTSSEVAVKNEEYDYDTIYRISPLPMDFQPTIEYNGYTYTLTRHYFDYSIGFYTAIYTKVV</sequence>
<keyword id="KW-1185">Reference proteome</keyword>
<keyword id="KW-0732">Signal</keyword>
<evidence type="ECO:0000255" key="1"/>
<organism>
    <name type="scientific">Bacillus subtilis (strain 168)</name>
    <dbReference type="NCBI Taxonomy" id="224308"/>
    <lineage>
        <taxon>Bacteria</taxon>
        <taxon>Bacillati</taxon>
        <taxon>Bacillota</taxon>
        <taxon>Bacilli</taxon>
        <taxon>Bacillales</taxon>
        <taxon>Bacillaceae</taxon>
        <taxon>Bacillus</taxon>
    </lineage>
</organism>
<proteinExistence type="inferred from homology"/>
<feature type="signal peptide" evidence="1">
    <location>
        <begin position="1"/>
        <end position="25"/>
    </location>
</feature>
<feature type="chain" id="PRO_0000013719" description="Uncharacterized protein YobB">
    <location>
        <begin position="26"/>
        <end position="87"/>
    </location>
</feature>
<protein>
    <recommendedName>
        <fullName>Uncharacterized protein YobB</fullName>
    </recommendedName>
</protein>
<dbReference type="EMBL" id="AL009126">
    <property type="protein sequence ID" value="CAB13774.1"/>
    <property type="molecule type" value="Genomic_DNA"/>
</dbReference>
<dbReference type="PIR" id="C69898">
    <property type="entry name" value="C69898"/>
</dbReference>
<dbReference type="RefSeq" id="NP_389763.1">
    <property type="nucleotide sequence ID" value="NC_000964.3"/>
</dbReference>
<dbReference type="RefSeq" id="WP_009967400.1">
    <property type="nucleotide sequence ID" value="NZ_OZ025638.1"/>
</dbReference>
<dbReference type="FunCoup" id="O31836">
    <property type="interactions" value="103"/>
</dbReference>
<dbReference type="PaxDb" id="224308-BSU18820"/>
<dbReference type="DNASU" id="940049"/>
<dbReference type="EnsemblBacteria" id="CAB13774">
    <property type="protein sequence ID" value="CAB13774"/>
    <property type="gene ID" value="BSU_18820"/>
</dbReference>
<dbReference type="GeneID" id="940049"/>
<dbReference type="KEGG" id="bsu:BSU18820"/>
<dbReference type="PATRIC" id="fig|224308.179.peg.2052"/>
<dbReference type="InParanoid" id="O31836"/>
<dbReference type="OrthoDB" id="9866889at2"/>
<dbReference type="BioCyc" id="BSUB:BSU18820-MONOMER"/>
<dbReference type="Proteomes" id="UP000001570">
    <property type="component" value="Chromosome"/>
</dbReference>